<evidence type="ECO:0000255" key="1">
    <source>
        <dbReference type="HAMAP-Rule" id="MF_01452"/>
    </source>
</evidence>
<comment type="function">
    <text evidence="1">The heterodimer acts as both an ATP-dependent DNA helicase and an ATP-dependent, dual-direction single-stranded exonuclease. Recognizes the chi site generating a DNA molecule suitable for the initiation of homologous recombination. The AddB subunit has 5' -&gt; 3' nuclease activity but not helicase activity.</text>
</comment>
<comment type="cofactor">
    <cofactor evidence="1">
        <name>Mg(2+)</name>
        <dbReference type="ChEBI" id="CHEBI:18420"/>
    </cofactor>
</comment>
<comment type="cofactor">
    <cofactor evidence="1">
        <name>[4Fe-4S] cluster</name>
        <dbReference type="ChEBI" id="CHEBI:49883"/>
    </cofactor>
    <text evidence="1">Binds 1 [4Fe-4S] cluster.</text>
</comment>
<comment type="subunit">
    <text evidence="1">Heterodimer of AddA and AddB.</text>
</comment>
<comment type="miscellaneous">
    <text evidence="1">Despite having conserved helicase domains, this subunit does not have helicase activity.</text>
</comment>
<comment type="similarity">
    <text evidence="1">Belongs to the helicase family. AddB/RexB type 1 subfamily.</text>
</comment>
<protein>
    <recommendedName>
        <fullName evidence="1">ATP-dependent helicase/deoxyribonuclease subunit B</fullName>
        <ecNumber evidence="1">3.1.-.-</ecNumber>
    </recommendedName>
    <alternativeName>
        <fullName evidence="1">ATP-dependent helicase/nuclease subunit AddB</fullName>
    </alternativeName>
</protein>
<accession>Q0SWW7</accession>
<proteinExistence type="inferred from homology"/>
<sequence>MGLKIIYGRAGTGKSTFCINQIKKKINNSPTNKLILLVPEQFTFQTENKVLNAIGERYVLNAEVLSFKRLAHNVFNECGGATRTIMGDAGKSMLIFKVLEDLGDNMTVFKNASRQKGFIDIASKTITEFKKYNVNNEVLDLTINEIEDENLKMKMEELKDVFNEFNSRLHEGYVDEEDQLLLLNEKLDGCSLYDGAEIWIDEFSSFTPNQLSVIGKLLKKAKSVNITLSIDEVNSPKVESDLFVATKNTEKRLMNLIQEEGIAFNGYINLNEDIPYRFKENKELAHIERQLYAYPFKQYRGENNSLRLYRANNNYDEIEFVAKDILRLVREKQYRFKDISVICREVDNYEKVISAIFAEYEIPYYIDKKIDIASNPLIVFINSAVDIISKNWTYESMFKYLKTGLIKEFRGIEGAELIDELENYVLAYGIKGKKWMEEWVNYSSSILKEEEISEENKQRLERLNDIRETIVTPLDEFNKECKGKKTLKEFAIILYEFLDSKLNIMDTIDKYVEYFKENDMAIEAKEYSEVRDIFIDVLEQAVDVLGNEVMDLDEFMKVLNIGLSQYEMGLIPVALDQVNIGDITRIKSRGTKALYIIGVNDGVLPSASKEEGILSDNDREILLEKGISLASDTRTKIFEEQFLVYTAFTIAEEYLVVTYPLADFEGKSQRPSIIVHRLKKILPNVKEESEGFKLVNDKYDKISAKIPTLNELMIAIRKNYDGAEIDDYWKYVYDWYLREPKWKERIEYVRKGLEYTNLENNISKEKAKKLYEDNKNKISLSVSRLERYAQCPFAYYIQYGLKAKDRKIYEFTAPDLGSFMHEILDEFTNEIKEKDLKWSDLSKENCKNIINSLVDNQVKNNKSSILNSSKRYSYFTDRFKRILTKSVMVISEQMKRSDFEIYKNELAFGFSKDVNSIKLDLPSGESFYLNGRIDRIDKLNLDGETYLRIIDYKTGSKKFDLNKFYNGLQMQLLVYLDALINNSENIVENQAMPGAILYFRIDDPILKSKGDLTEEEIKSEILKELKLEGLLLDDVKVVKAMDNTLEPGTHSLIIPANMKKAGDLGKNKALITMEQFELLRKYVNEKMVEICQNMIEGKIDIEPCKENKNIVCDYCNYSHICQFDSSLEDNRYKVIPKKKDEDIWKSINEKVGGEVNGD</sequence>
<organism>
    <name type="scientific">Clostridium perfringens (strain SM101 / Type A)</name>
    <dbReference type="NCBI Taxonomy" id="289380"/>
    <lineage>
        <taxon>Bacteria</taxon>
        <taxon>Bacillati</taxon>
        <taxon>Bacillota</taxon>
        <taxon>Clostridia</taxon>
        <taxon>Eubacteriales</taxon>
        <taxon>Clostridiaceae</taxon>
        <taxon>Clostridium</taxon>
    </lineage>
</organism>
<gene>
    <name evidence="1" type="primary">addB</name>
    <name type="ordered locus">CPR_0024</name>
</gene>
<name>ADDB_CLOPS</name>
<keyword id="KW-0004">4Fe-4S</keyword>
<keyword id="KW-0067">ATP-binding</keyword>
<keyword id="KW-0227">DNA damage</keyword>
<keyword id="KW-0234">DNA repair</keyword>
<keyword id="KW-0238">DNA-binding</keyword>
<keyword id="KW-0269">Exonuclease</keyword>
<keyword id="KW-0347">Helicase</keyword>
<keyword id="KW-0378">Hydrolase</keyword>
<keyword id="KW-0408">Iron</keyword>
<keyword id="KW-0411">Iron-sulfur</keyword>
<keyword id="KW-0479">Metal-binding</keyword>
<keyword id="KW-0540">Nuclease</keyword>
<keyword id="KW-0547">Nucleotide-binding</keyword>
<dbReference type="EC" id="3.1.-.-" evidence="1"/>
<dbReference type="EMBL" id="CP000312">
    <property type="protein sequence ID" value="ABG86087.1"/>
    <property type="molecule type" value="Genomic_DNA"/>
</dbReference>
<dbReference type="RefSeq" id="WP_011591207.1">
    <property type="nucleotide sequence ID" value="NC_008262.1"/>
</dbReference>
<dbReference type="SMR" id="Q0SWW7"/>
<dbReference type="KEGG" id="cpr:CPR_0024"/>
<dbReference type="Proteomes" id="UP000001824">
    <property type="component" value="Chromosome"/>
</dbReference>
<dbReference type="GO" id="GO:0051539">
    <property type="term" value="F:4 iron, 4 sulfur cluster binding"/>
    <property type="evidence" value="ECO:0007669"/>
    <property type="project" value="UniProtKB-KW"/>
</dbReference>
<dbReference type="GO" id="GO:0008409">
    <property type="term" value="F:5'-3' exonuclease activity"/>
    <property type="evidence" value="ECO:0007669"/>
    <property type="project" value="UniProtKB-UniRule"/>
</dbReference>
<dbReference type="GO" id="GO:0005524">
    <property type="term" value="F:ATP binding"/>
    <property type="evidence" value="ECO:0007669"/>
    <property type="project" value="UniProtKB-UniRule"/>
</dbReference>
<dbReference type="GO" id="GO:0003690">
    <property type="term" value="F:double-stranded DNA binding"/>
    <property type="evidence" value="ECO:0007669"/>
    <property type="project" value="UniProtKB-UniRule"/>
</dbReference>
<dbReference type="GO" id="GO:0004386">
    <property type="term" value="F:helicase activity"/>
    <property type="evidence" value="ECO:0007669"/>
    <property type="project" value="UniProtKB-KW"/>
</dbReference>
<dbReference type="GO" id="GO:0046872">
    <property type="term" value="F:metal ion binding"/>
    <property type="evidence" value="ECO:0007669"/>
    <property type="project" value="UniProtKB-KW"/>
</dbReference>
<dbReference type="GO" id="GO:0000724">
    <property type="term" value="P:double-strand break repair via homologous recombination"/>
    <property type="evidence" value="ECO:0007669"/>
    <property type="project" value="UniProtKB-UniRule"/>
</dbReference>
<dbReference type="Gene3D" id="3.90.320.10">
    <property type="match status" value="1"/>
</dbReference>
<dbReference type="Gene3D" id="6.10.140.1030">
    <property type="match status" value="1"/>
</dbReference>
<dbReference type="Gene3D" id="3.40.50.300">
    <property type="entry name" value="P-loop containing nucleotide triphosphate hydrolases"/>
    <property type="match status" value="3"/>
</dbReference>
<dbReference type="HAMAP" id="MF_01452">
    <property type="entry name" value="AddB_type1"/>
    <property type="match status" value="1"/>
</dbReference>
<dbReference type="InterPro" id="IPR049035">
    <property type="entry name" value="ADDB_N"/>
</dbReference>
<dbReference type="InterPro" id="IPR014140">
    <property type="entry name" value="DNA_helicase_suAddB"/>
</dbReference>
<dbReference type="InterPro" id="IPR027417">
    <property type="entry name" value="P-loop_NTPase"/>
</dbReference>
<dbReference type="InterPro" id="IPR011604">
    <property type="entry name" value="PDDEXK-like_dom_sf"/>
</dbReference>
<dbReference type="InterPro" id="IPR038726">
    <property type="entry name" value="PDDEXK_AddAB-type"/>
</dbReference>
<dbReference type="InterPro" id="IPR011335">
    <property type="entry name" value="Restrct_endonuc-II-like"/>
</dbReference>
<dbReference type="NCBIfam" id="TIGR02773">
    <property type="entry name" value="addB_Gpos"/>
    <property type="match status" value="1"/>
</dbReference>
<dbReference type="PANTHER" id="PTHR30591">
    <property type="entry name" value="RECBCD ENZYME SUBUNIT RECC"/>
    <property type="match status" value="1"/>
</dbReference>
<dbReference type="PANTHER" id="PTHR30591:SF1">
    <property type="entry name" value="RECBCD ENZYME SUBUNIT RECC"/>
    <property type="match status" value="1"/>
</dbReference>
<dbReference type="Pfam" id="PF21445">
    <property type="entry name" value="ADDB_N"/>
    <property type="match status" value="1"/>
</dbReference>
<dbReference type="Pfam" id="PF12705">
    <property type="entry name" value="PDDEXK_1"/>
    <property type="match status" value="1"/>
</dbReference>
<dbReference type="SUPFAM" id="SSF52540">
    <property type="entry name" value="P-loop containing nucleoside triphosphate hydrolases"/>
    <property type="match status" value="2"/>
</dbReference>
<dbReference type="SUPFAM" id="SSF52980">
    <property type="entry name" value="Restriction endonuclease-like"/>
    <property type="match status" value="1"/>
</dbReference>
<reference key="1">
    <citation type="journal article" date="2006" name="Genome Res.">
        <title>Skewed genomic variability in strains of the toxigenic bacterial pathogen, Clostridium perfringens.</title>
        <authorList>
            <person name="Myers G.S.A."/>
            <person name="Rasko D.A."/>
            <person name="Cheung J.K."/>
            <person name="Ravel J."/>
            <person name="Seshadri R."/>
            <person name="DeBoy R.T."/>
            <person name="Ren Q."/>
            <person name="Varga J."/>
            <person name="Awad M.M."/>
            <person name="Brinkac L.M."/>
            <person name="Daugherty S.C."/>
            <person name="Haft D.H."/>
            <person name="Dodson R.J."/>
            <person name="Madupu R."/>
            <person name="Nelson W.C."/>
            <person name="Rosovitz M.J."/>
            <person name="Sullivan S.A."/>
            <person name="Khouri H."/>
            <person name="Dimitrov G.I."/>
            <person name="Watkins K.L."/>
            <person name="Mulligan S."/>
            <person name="Benton J."/>
            <person name="Radune D."/>
            <person name="Fisher D.J."/>
            <person name="Atkins H.S."/>
            <person name="Hiscox T."/>
            <person name="Jost B.H."/>
            <person name="Billington S.J."/>
            <person name="Songer J.G."/>
            <person name="McClane B.A."/>
            <person name="Titball R.W."/>
            <person name="Rood J.I."/>
            <person name="Melville S.B."/>
            <person name="Paulsen I.T."/>
        </authorList>
    </citation>
    <scope>NUCLEOTIDE SEQUENCE [LARGE SCALE GENOMIC DNA]</scope>
    <source>
        <strain>SM101 / Type A</strain>
    </source>
</reference>
<feature type="chain" id="PRO_0000379182" description="ATP-dependent helicase/deoxyribonuclease subunit B">
    <location>
        <begin position="1"/>
        <end position="1158"/>
    </location>
</feature>
<feature type="binding site" evidence="1">
    <location>
        <begin position="8"/>
        <end position="15"/>
    </location>
    <ligand>
        <name>ATP</name>
        <dbReference type="ChEBI" id="CHEBI:30616"/>
    </ligand>
</feature>
<feature type="binding site" evidence="1">
    <location>
        <position position="791"/>
    </location>
    <ligand>
        <name>[4Fe-4S] cluster</name>
        <dbReference type="ChEBI" id="CHEBI:49883"/>
    </ligand>
</feature>
<feature type="binding site" evidence="1">
    <location>
        <position position="1112"/>
    </location>
    <ligand>
        <name>[4Fe-4S] cluster</name>
        <dbReference type="ChEBI" id="CHEBI:49883"/>
    </ligand>
</feature>
<feature type="binding site" evidence="1">
    <location>
        <position position="1115"/>
    </location>
    <ligand>
        <name>[4Fe-4S] cluster</name>
        <dbReference type="ChEBI" id="CHEBI:49883"/>
    </ligand>
</feature>
<feature type="binding site" evidence="1">
    <location>
        <position position="1121"/>
    </location>
    <ligand>
        <name>[4Fe-4S] cluster</name>
        <dbReference type="ChEBI" id="CHEBI:49883"/>
    </ligand>
</feature>